<evidence type="ECO:0000255" key="1">
    <source>
        <dbReference type="HAMAP-Rule" id="MF_00102"/>
    </source>
</evidence>
<evidence type="ECO:0000305" key="2"/>
<accession>A7MXR0</accession>
<reference key="1">
    <citation type="submission" date="2007-08" db="EMBL/GenBank/DDBJ databases">
        <authorList>
            <consortium name="The Vibrio harveyi Genome Sequencing Project"/>
            <person name="Bassler B."/>
            <person name="Clifton S.W."/>
            <person name="Fulton L."/>
            <person name="Delehaunty K."/>
            <person name="Fronick C."/>
            <person name="Harrison M."/>
            <person name="Markivic C."/>
            <person name="Fulton R."/>
            <person name="Tin-Wollam A.-M."/>
            <person name="Shah N."/>
            <person name="Pepin K."/>
            <person name="Nash W."/>
            <person name="Thiruvilangam P."/>
            <person name="Bhonagiri V."/>
            <person name="Waters C."/>
            <person name="Tu K.C."/>
            <person name="Irgon J."/>
            <person name="Wilson R.K."/>
        </authorList>
    </citation>
    <scope>NUCLEOTIDE SEQUENCE [LARGE SCALE GENOMIC DNA]</scope>
    <source>
        <strain>ATCC BAA-1116 / BB120</strain>
    </source>
</reference>
<dbReference type="EC" id="1.17.1.8" evidence="1"/>
<dbReference type="EMBL" id="CP000789">
    <property type="protein sequence ID" value="ABU69910.1"/>
    <property type="molecule type" value="Genomic_DNA"/>
</dbReference>
<dbReference type="RefSeq" id="WP_012126993.1">
    <property type="nucleotide sequence ID" value="NC_009783.1"/>
</dbReference>
<dbReference type="SMR" id="A7MXR0"/>
<dbReference type="KEGG" id="vha:VIBHAR_00911"/>
<dbReference type="PATRIC" id="fig|338187.25.peg.1707"/>
<dbReference type="UniPathway" id="UPA00034">
    <property type="reaction ID" value="UER00018"/>
</dbReference>
<dbReference type="Proteomes" id="UP000008152">
    <property type="component" value="Chromosome I"/>
</dbReference>
<dbReference type="GO" id="GO:0005829">
    <property type="term" value="C:cytosol"/>
    <property type="evidence" value="ECO:0007669"/>
    <property type="project" value="TreeGrafter"/>
</dbReference>
<dbReference type="GO" id="GO:0008839">
    <property type="term" value="F:4-hydroxy-tetrahydrodipicolinate reductase"/>
    <property type="evidence" value="ECO:0007669"/>
    <property type="project" value="UniProtKB-EC"/>
</dbReference>
<dbReference type="GO" id="GO:0051287">
    <property type="term" value="F:NAD binding"/>
    <property type="evidence" value="ECO:0007669"/>
    <property type="project" value="UniProtKB-UniRule"/>
</dbReference>
<dbReference type="GO" id="GO:0050661">
    <property type="term" value="F:NADP binding"/>
    <property type="evidence" value="ECO:0007669"/>
    <property type="project" value="UniProtKB-UniRule"/>
</dbReference>
<dbReference type="GO" id="GO:0016726">
    <property type="term" value="F:oxidoreductase activity, acting on CH or CH2 groups, NAD or NADP as acceptor"/>
    <property type="evidence" value="ECO:0007669"/>
    <property type="project" value="UniProtKB-UniRule"/>
</dbReference>
<dbReference type="GO" id="GO:0019877">
    <property type="term" value="P:diaminopimelate biosynthetic process"/>
    <property type="evidence" value="ECO:0007669"/>
    <property type="project" value="UniProtKB-UniRule"/>
</dbReference>
<dbReference type="GO" id="GO:0009089">
    <property type="term" value="P:lysine biosynthetic process via diaminopimelate"/>
    <property type="evidence" value="ECO:0007669"/>
    <property type="project" value="UniProtKB-UniRule"/>
</dbReference>
<dbReference type="CDD" id="cd02274">
    <property type="entry name" value="DHDPR_N"/>
    <property type="match status" value="1"/>
</dbReference>
<dbReference type="FunFam" id="3.30.360.10:FF:000004">
    <property type="entry name" value="4-hydroxy-tetrahydrodipicolinate reductase"/>
    <property type="match status" value="1"/>
</dbReference>
<dbReference type="FunFam" id="3.40.50.720:FF:000048">
    <property type="entry name" value="4-hydroxy-tetrahydrodipicolinate reductase"/>
    <property type="match status" value="1"/>
</dbReference>
<dbReference type="Gene3D" id="3.30.360.10">
    <property type="entry name" value="Dihydrodipicolinate Reductase, domain 2"/>
    <property type="match status" value="1"/>
</dbReference>
<dbReference type="Gene3D" id="3.40.50.720">
    <property type="entry name" value="NAD(P)-binding Rossmann-like Domain"/>
    <property type="match status" value="1"/>
</dbReference>
<dbReference type="HAMAP" id="MF_00102">
    <property type="entry name" value="DapB"/>
    <property type="match status" value="1"/>
</dbReference>
<dbReference type="InterPro" id="IPR022663">
    <property type="entry name" value="DapB_C"/>
</dbReference>
<dbReference type="InterPro" id="IPR000846">
    <property type="entry name" value="DapB_N"/>
</dbReference>
<dbReference type="InterPro" id="IPR022664">
    <property type="entry name" value="DapB_N_CS"/>
</dbReference>
<dbReference type="InterPro" id="IPR023940">
    <property type="entry name" value="DHDPR_bac"/>
</dbReference>
<dbReference type="InterPro" id="IPR036291">
    <property type="entry name" value="NAD(P)-bd_dom_sf"/>
</dbReference>
<dbReference type="NCBIfam" id="TIGR00036">
    <property type="entry name" value="dapB"/>
    <property type="match status" value="1"/>
</dbReference>
<dbReference type="PANTHER" id="PTHR20836:SF0">
    <property type="entry name" value="4-HYDROXY-TETRAHYDRODIPICOLINATE REDUCTASE 1, CHLOROPLASTIC-RELATED"/>
    <property type="match status" value="1"/>
</dbReference>
<dbReference type="PANTHER" id="PTHR20836">
    <property type="entry name" value="DIHYDRODIPICOLINATE REDUCTASE"/>
    <property type="match status" value="1"/>
</dbReference>
<dbReference type="Pfam" id="PF05173">
    <property type="entry name" value="DapB_C"/>
    <property type="match status" value="1"/>
</dbReference>
<dbReference type="Pfam" id="PF01113">
    <property type="entry name" value="DapB_N"/>
    <property type="match status" value="1"/>
</dbReference>
<dbReference type="PIRSF" id="PIRSF000161">
    <property type="entry name" value="DHPR"/>
    <property type="match status" value="1"/>
</dbReference>
<dbReference type="SUPFAM" id="SSF55347">
    <property type="entry name" value="Glyceraldehyde-3-phosphate dehydrogenase-like, C-terminal domain"/>
    <property type="match status" value="1"/>
</dbReference>
<dbReference type="SUPFAM" id="SSF51735">
    <property type="entry name" value="NAD(P)-binding Rossmann-fold domains"/>
    <property type="match status" value="1"/>
</dbReference>
<dbReference type="PROSITE" id="PS01298">
    <property type="entry name" value="DAPB"/>
    <property type="match status" value="1"/>
</dbReference>
<comment type="function">
    <text evidence="1">Catalyzes the conversion of 4-hydroxy-tetrahydrodipicolinate (HTPA) to tetrahydrodipicolinate.</text>
</comment>
<comment type="catalytic activity">
    <reaction evidence="1">
        <text>(S)-2,3,4,5-tetrahydrodipicolinate + NAD(+) + H2O = (2S,4S)-4-hydroxy-2,3,4,5-tetrahydrodipicolinate + NADH + H(+)</text>
        <dbReference type="Rhea" id="RHEA:35323"/>
        <dbReference type="ChEBI" id="CHEBI:15377"/>
        <dbReference type="ChEBI" id="CHEBI:15378"/>
        <dbReference type="ChEBI" id="CHEBI:16845"/>
        <dbReference type="ChEBI" id="CHEBI:57540"/>
        <dbReference type="ChEBI" id="CHEBI:57945"/>
        <dbReference type="ChEBI" id="CHEBI:67139"/>
        <dbReference type="EC" id="1.17.1.8"/>
    </reaction>
</comment>
<comment type="catalytic activity">
    <reaction evidence="1">
        <text>(S)-2,3,4,5-tetrahydrodipicolinate + NADP(+) + H2O = (2S,4S)-4-hydroxy-2,3,4,5-tetrahydrodipicolinate + NADPH + H(+)</text>
        <dbReference type="Rhea" id="RHEA:35331"/>
        <dbReference type="ChEBI" id="CHEBI:15377"/>
        <dbReference type="ChEBI" id="CHEBI:15378"/>
        <dbReference type="ChEBI" id="CHEBI:16845"/>
        <dbReference type="ChEBI" id="CHEBI:57783"/>
        <dbReference type="ChEBI" id="CHEBI:58349"/>
        <dbReference type="ChEBI" id="CHEBI:67139"/>
        <dbReference type="EC" id="1.17.1.8"/>
    </reaction>
</comment>
<comment type="pathway">
    <text evidence="1">Amino-acid biosynthesis; L-lysine biosynthesis via DAP pathway; (S)-tetrahydrodipicolinate from L-aspartate: step 4/4.</text>
</comment>
<comment type="subcellular location">
    <subcellularLocation>
        <location evidence="1">Cytoplasm</location>
    </subcellularLocation>
</comment>
<comment type="similarity">
    <text evidence="1">Belongs to the DapB family.</text>
</comment>
<comment type="caution">
    <text evidence="2">Was originally thought to be a dihydrodipicolinate reductase (DHDPR), catalyzing the conversion of dihydrodipicolinate to tetrahydrodipicolinate. However, it was shown in E.coli that the substrate of the enzymatic reaction is not dihydrodipicolinate (DHDP) but in fact (2S,4S)-4-hydroxy-2,3,4,5-tetrahydrodipicolinic acid (HTPA), the product released by the DapA-catalyzed reaction.</text>
</comment>
<sequence>MVRIAIAGAAGRMGRNLVKASHLNPEASVTAGSERPESSLVGVDVGELCGEGKFDVFLTDDLTKEVDNFDVVIDFTAPVSTLANLELCKQHGKSIIIGTTGFSEEERELIDEAAKQVPVVMAPNYSVGVNLVFKLLEKAAKVMGDYCDIEIVEAHHRHKVDAPSGTAIGMGEAIAGAMGNKLSDVAVYAREGITGERTKDEIGFATIRAGDIVGEHTAMFADIGERVEITHKATDRMTFANGAVKAAVWLHSKPAGFYTMTDVLGLNEL</sequence>
<organism>
    <name type="scientific">Vibrio campbellii (strain ATCC BAA-1116)</name>
    <dbReference type="NCBI Taxonomy" id="2902295"/>
    <lineage>
        <taxon>Bacteria</taxon>
        <taxon>Pseudomonadati</taxon>
        <taxon>Pseudomonadota</taxon>
        <taxon>Gammaproteobacteria</taxon>
        <taxon>Vibrionales</taxon>
        <taxon>Vibrionaceae</taxon>
        <taxon>Vibrio</taxon>
    </lineage>
</organism>
<keyword id="KW-0028">Amino-acid biosynthesis</keyword>
<keyword id="KW-0963">Cytoplasm</keyword>
<keyword id="KW-0220">Diaminopimelate biosynthesis</keyword>
<keyword id="KW-0457">Lysine biosynthesis</keyword>
<keyword id="KW-0520">NAD</keyword>
<keyword id="KW-0521">NADP</keyword>
<keyword id="KW-0560">Oxidoreductase</keyword>
<proteinExistence type="inferred from homology"/>
<feature type="chain" id="PRO_1000008661" description="4-hydroxy-tetrahydrodipicolinate reductase">
    <location>
        <begin position="1"/>
        <end position="269"/>
    </location>
</feature>
<feature type="active site" description="Proton donor/acceptor" evidence="1">
    <location>
        <position position="155"/>
    </location>
</feature>
<feature type="active site" description="Proton donor" evidence="1">
    <location>
        <position position="159"/>
    </location>
</feature>
<feature type="binding site" evidence="1">
    <location>
        <begin position="8"/>
        <end position="13"/>
    </location>
    <ligand>
        <name>NAD(+)</name>
        <dbReference type="ChEBI" id="CHEBI:57540"/>
    </ligand>
</feature>
<feature type="binding site" evidence="1">
    <location>
        <position position="34"/>
    </location>
    <ligand>
        <name>NAD(+)</name>
        <dbReference type="ChEBI" id="CHEBI:57540"/>
    </ligand>
</feature>
<feature type="binding site" evidence="1">
    <location>
        <position position="35"/>
    </location>
    <ligand>
        <name>NADP(+)</name>
        <dbReference type="ChEBI" id="CHEBI:58349"/>
    </ligand>
</feature>
<feature type="binding site" evidence="1">
    <location>
        <begin position="98"/>
        <end position="100"/>
    </location>
    <ligand>
        <name>NAD(+)</name>
        <dbReference type="ChEBI" id="CHEBI:57540"/>
    </ligand>
</feature>
<feature type="binding site" evidence="1">
    <location>
        <begin position="122"/>
        <end position="125"/>
    </location>
    <ligand>
        <name>NAD(+)</name>
        <dbReference type="ChEBI" id="CHEBI:57540"/>
    </ligand>
</feature>
<feature type="binding site" evidence="1">
    <location>
        <position position="156"/>
    </location>
    <ligand>
        <name>(S)-2,3,4,5-tetrahydrodipicolinate</name>
        <dbReference type="ChEBI" id="CHEBI:16845"/>
    </ligand>
</feature>
<feature type="binding site" evidence="1">
    <location>
        <begin position="165"/>
        <end position="166"/>
    </location>
    <ligand>
        <name>(S)-2,3,4,5-tetrahydrodipicolinate</name>
        <dbReference type="ChEBI" id="CHEBI:16845"/>
    </ligand>
</feature>
<protein>
    <recommendedName>
        <fullName evidence="1">4-hydroxy-tetrahydrodipicolinate reductase</fullName>
        <shortName evidence="1">HTPA reductase</shortName>
        <ecNumber evidence="1">1.17.1.8</ecNumber>
    </recommendedName>
</protein>
<gene>
    <name evidence="1" type="primary">dapB</name>
    <name type="ordered locus">VIBHAR_00911</name>
</gene>
<name>DAPB_VIBC1</name>